<keyword id="KW-0028">Amino-acid biosynthesis</keyword>
<keyword id="KW-0963">Cytoplasm</keyword>
<keyword id="KW-0220">Diaminopimelate biosynthesis</keyword>
<keyword id="KW-0456">Lyase</keyword>
<keyword id="KW-0457">Lysine biosynthesis</keyword>
<keyword id="KW-0704">Schiff base</keyword>
<protein>
    <recommendedName>
        <fullName evidence="1">4-hydroxy-tetrahydrodipicolinate synthase</fullName>
        <shortName evidence="1">HTPA synthase</shortName>
        <ecNumber evidence="1">4.3.3.7</ecNumber>
    </recommendedName>
</protein>
<proteinExistence type="inferred from homology"/>
<evidence type="ECO:0000255" key="1">
    <source>
        <dbReference type="HAMAP-Rule" id="MF_00418"/>
    </source>
</evidence>
<evidence type="ECO:0000305" key="2"/>
<organism>
    <name type="scientific">Rickettsia canadensis (strain McKiel)</name>
    <dbReference type="NCBI Taxonomy" id="293613"/>
    <lineage>
        <taxon>Bacteria</taxon>
        <taxon>Pseudomonadati</taxon>
        <taxon>Pseudomonadota</taxon>
        <taxon>Alphaproteobacteria</taxon>
        <taxon>Rickettsiales</taxon>
        <taxon>Rickettsiaceae</taxon>
        <taxon>Rickettsieae</taxon>
        <taxon>Rickettsia</taxon>
        <taxon>belli group</taxon>
    </lineage>
</organism>
<reference key="1">
    <citation type="submission" date="2007-09" db="EMBL/GenBank/DDBJ databases">
        <title>Complete genome sequence of Rickettsia canadensis.</title>
        <authorList>
            <person name="Madan A."/>
            <person name="Fahey J."/>
            <person name="Helton E."/>
            <person name="Ketteman M."/>
            <person name="Madan A."/>
            <person name="Rodrigues S."/>
            <person name="Sanchez A."/>
            <person name="Whiting M."/>
            <person name="Dasch G."/>
            <person name="Eremeeva M."/>
        </authorList>
    </citation>
    <scope>NUCLEOTIDE SEQUENCE [LARGE SCALE GENOMIC DNA]</scope>
    <source>
        <strain>McKiel</strain>
    </source>
</reference>
<accession>A8EYZ4</accession>
<comment type="function">
    <text evidence="1">Catalyzes the condensation of (S)-aspartate-beta-semialdehyde [(S)-ASA] and pyruvate to 4-hydroxy-tetrahydrodipicolinate (HTPA).</text>
</comment>
<comment type="catalytic activity">
    <reaction evidence="1">
        <text>L-aspartate 4-semialdehyde + pyruvate = (2S,4S)-4-hydroxy-2,3,4,5-tetrahydrodipicolinate + H2O + H(+)</text>
        <dbReference type="Rhea" id="RHEA:34171"/>
        <dbReference type="ChEBI" id="CHEBI:15361"/>
        <dbReference type="ChEBI" id="CHEBI:15377"/>
        <dbReference type="ChEBI" id="CHEBI:15378"/>
        <dbReference type="ChEBI" id="CHEBI:67139"/>
        <dbReference type="ChEBI" id="CHEBI:537519"/>
        <dbReference type="EC" id="4.3.3.7"/>
    </reaction>
</comment>
<comment type="pathway">
    <text evidence="1">Amino-acid biosynthesis; L-lysine biosynthesis via DAP pathway; (S)-tetrahydrodipicolinate from L-aspartate: step 3/4.</text>
</comment>
<comment type="subunit">
    <text evidence="1">Homotetramer; dimer of dimers.</text>
</comment>
<comment type="subcellular location">
    <subcellularLocation>
        <location evidence="1">Cytoplasm</location>
    </subcellularLocation>
</comment>
<comment type="similarity">
    <text evidence="1">Belongs to the DapA family.</text>
</comment>
<comment type="caution">
    <text evidence="2">Was originally thought to be a dihydrodipicolinate synthase (DHDPS), catalyzing the condensation of (S)-aspartate-beta-semialdehyde [(S)-ASA] and pyruvate to dihydrodipicolinate (DHDP). However, it was shown in E.coli that the product of the enzymatic reaction is not dihydrodipicolinate but in fact (4S)-4-hydroxy-2,3,4,5-tetrahydro-(2S)-dipicolinic acid (HTPA), and that the consecutive dehydration reaction leading to DHDP is not spontaneous but catalyzed by DapB.</text>
</comment>
<gene>
    <name evidence="1" type="primary">dapA</name>
    <name type="ordered locus">A1E_03210</name>
</gene>
<name>DAPA_RICCK</name>
<dbReference type="EC" id="4.3.3.7" evidence="1"/>
<dbReference type="EMBL" id="CP000409">
    <property type="protein sequence ID" value="ABV73577.1"/>
    <property type="molecule type" value="Genomic_DNA"/>
</dbReference>
<dbReference type="RefSeq" id="WP_012148773.1">
    <property type="nucleotide sequence ID" value="NC_009879.1"/>
</dbReference>
<dbReference type="SMR" id="A8EYZ4"/>
<dbReference type="STRING" id="293613.A1E_03210"/>
<dbReference type="KEGG" id="rcm:A1E_03210"/>
<dbReference type="eggNOG" id="COG0329">
    <property type="taxonomic scope" value="Bacteria"/>
</dbReference>
<dbReference type="HOGENOM" id="CLU_049343_7_1_5"/>
<dbReference type="UniPathway" id="UPA00034">
    <property type="reaction ID" value="UER00017"/>
</dbReference>
<dbReference type="Proteomes" id="UP000007056">
    <property type="component" value="Chromosome"/>
</dbReference>
<dbReference type="GO" id="GO:0005737">
    <property type="term" value="C:cytoplasm"/>
    <property type="evidence" value="ECO:0007669"/>
    <property type="project" value="UniProtKB-SubCell"/>
</dbReference>
<dbReference type="GO" id="GO:0008700">
    <property type="term" value="F:(R,S)-4-hydroxy-2-oxoglutarate aldolase activity"/>
    <property type="evidence" value="ECO:0007669"/>
    <property type="project" value="TreeGrafter"/>
</dbReference>
<dbReference type="GO" id="GO:0008840">
    <property type="term" value="F:4-hydroxy-tetrahydrodipicolinate synthase activity"/>
    <property type="evidence" value="ECO:0007669"/>
    <property type="project" value="UniProtKB-UniRule"/>
</dbReference>
<dbReference type="GO" id="GO:0019877">
    <property type="term" value="P:diaminopimelate biosynthetic process"/>
    <property type="evidence" value="ECO:0007669"/>
    <property type="project" value="UniProtKB-UniRule"/>
</dbReference>
<dbReference type="GO" id="GO:0009436">
    <property type="term" value="P:glyoxylate catabolic process"/>
    <property type="evidence" value="ECO:0007669"/>
    <property type="project" value="TreeGrafter"/>
</dbReference>
<dbReference type="GO" id="GO:0009089">
    <property type="term" value="P:lysine biosynthetic process via diaminopimelate"/>
    <property type="evidence" value="ECO:0007669"/>
    <property type="project" value="UniProtKB-UniRule"/>
</dbReference>
<dbReference type="CDD" id="cd00950">
    <property type="entry name" value="DHDPS"/>
    <property type="match status" value="1"/>
</dbReference>
<dbReference type="Gene3D" id="3.20.20.70">
    <property type="entry name" value="Aldolase class I"/>
    <property type="match status" value="1"/>
</dbReference>
<dbReference type="HAMAP" id="MF_00418">
    <property type="entry name" value="DapA"/>
    <property type="match status" value="1"/>
</dbReference>
<dbReference type="InterPro" id="IPR013785">
    <property type="entry name" value="Aldolase_TIM"/>
</dbReference>
<dbReference type="InterPro" id="IPR005263">
    <property type="entry name" value="DapA"/>
</dbReference>
<dbReference type="InterPro" id="IPR002220">
    <property type="entry name" value="DapA-like"/>
</dbReference>
<dbReference type="InterPro" id="IPR020625">
    <property type="entry name" value="Schiff_base-form_aldolases_AS"/>
</dbReference>
<dbReference type="NCBIfam" id="TIGR00674">
    <property type="entry name" value="dapA"/>
    <property type="match status" value="1"/>
</dbReference>
<dbReference type="PANTHER" id="PTHR12128:SF66">
    <property type="entry name" value="4-HYDROXY-2-OXOGLUTARATE ALDOLASE, MITOCHONDRIAL"/>
    <property type="match status" value="1"/>
</dbReference>
<dbReference type="PANTHER" id="PTHR12128">
    <property type="entry name" value="DIHYDRODIPICOLINATE SYNTHASE"/>
    <property type="match status" value="1"/>
</dbReference>
<dbReference type="Pfam" id="PF00701">
    <property type="entry name" value="DHDPS"/>
    <property type="match status" value="1"/>
</dbReference>
<dbReference type="PIRSF" id="PIRSF001365">
    <property type="entry name" value="DHDPS"/>
    <property type="match status" value="1"/>
</dbReference>
<dbReference type="PRINTS" id="PR00146">
    <property type="entry name" value="DHPICSNTHASE"/>
</dbReference>
<dbReference type="SMART" id="SM01130">
    <property type="entry name" value="DHDPS"/>
    <property type="match status" value="1"/>
</dbReference>
<dbReference type="SUPFAM" id="SSF51569">
    <property type="entry name" value="Aldolase"/>
    <property type="match status" value="1"/>
</dbReference>
<dbReference type="PROSITE" id="PS00666">
    <property type="entry name" value="DHDPS_2"/>
    <property type="match status" value="1"/>
</dbReference>
<sequence>MHNIFKGLITAAITPFKDNTLDLDALEKILEHQIKYEVDGVLIAGSTGECSNLSFEEYKLLLQTSLEIVNKRIPIISGCSSNNTAYARELAAESTKIGVDGFMASPPSYIKPTQEGIYKHFEALHEACNIPIMLYSAPTRSGVDFSDETILRLSKLSRILALKDCGVDLERPMRIRTIVKEDFNLLTGNDEVVLAFNAQGGVGWVSVASNIVPNICKELLEKWYKNDVKEALEIHQRLLPLYKALFVESNPIPIKYAAHYLGLCANKIRLPLTEASYKTKKQIENIITSLSIKI</sequence>
<feature type="chain" id="PRO_1000050257" description="4-hydroxy-tetrahydrodipicolinate synthase">
    <location>
        <begin position="1"/>
        <end position="294"/>
    </location>
</feature>
<feature type="active site" description="Proton donor/acceptor" evidence="1">
    <location>
        <position position="135"/>
    </location>
</feature>
<feature type="active site" description="Schiff-base intermediate with substrate" evidence="1">
    <location>
        <position position="163"/>
    </location>
</feature>
<feature type="binding site" evidence="1">
    <location>
        <position position="47"/>
    </location>
    <ligand>
        <name>pyruvate</name>
        <dbReference type="ChEBI" id="CHEBI:15361"/>
    </ligand>
</feature>
<feature type="binding site" evidence="1">
    <location>
        <position position="205"/>
    </location>
    <ligand>
        <name>pyruvate</name>
        <dbReference type="ChEBI" id="CHEBI:15361"/>
    </ligand>
</feature>
<feature type="site" description="Part of a proton relay during catalysis" evidence="1">
    <location>
        <position position="46"/>
    </location>
</feature>
<feature type="site" description="Part of a proton relay during catalysis" evidence="1">
    <location>
        <position position="109"/>
    </location>
</feature>